<organism>
    <name type="scientific">Glaesserella parasuis serovar 5 (strain SH0165)</name>
    <name type="common">Haemophilus parasuis</name>
    <dbReference type="NCBI Taxonomy" id="557723"/>
    <lineage>
        <taxon>Bacteria</taxon>
        <taxon>Pseudomonadati</taxon>
        <taxon>Pseudomonadota</taxon>
        <taxon>Gammaproteobacteria</taxon>
        <taxon>Pasteurellales</taxon>
        <taxon>Pasteurellaceae</taxon>
        <taxon>Glaesserella</taxon>
    </lineage>
</organism>
<evidence type="ECO:0000255" key="1">
    <source>
        <dbReference type="HAMAP-Rule" id="MF_01690"/>
    </source>
</evidence>
<sequence length="377" mass="41446">MQNQIISLSRSLIQRKSISPNDEGCQQLIAERLQAVRFKLEWLPFGDTLNLWATHGEGEPCLAFAGHTDVVPEGDESQWTYPPFSAEIVDDMLYGRGAADMKGSLAAMVIACETFVKNNPNHQGKIALLITSDEEAAAKDGTVKVVETLMQRQEPIHYCVVGEPSSTKQLGDVVKNGRRGSITANLYIEGIQGHVAYPHLAENPVHTALPFLSELTAYQWDNGNEFFPPTSLQIANIKAGTGSNNVIPGELYVQFNLRYCTEVNDEIIKTKVAEMLRKYGLKHRIEWNLSGKPFLADNGKLVQATIQAVENVTQITPKLDTGGGTSDGRFIALMGAEVVEFGPINQTIHKVNECVNVNDLGKCGEVYYQILCSVIPN</sequence>
<proteinExistence type="inferred from homology"/>
<protein>
    <recommendedName>
        <fullName evidence="1">Succinyl-diaminopimelate desuccinylase</fullName>
        <shortName evidence="1">SDAP desuccinylase</shortName>
        <ecNumber evidence="1">3.5.1.18</ecNumber>
    </recommendedName>
    <alternativeName>
        <fullName evidence="1">N-succinyl-LL-2,6-diaminoheptanedioate amidohydrolase</fullName>
    </alternativeName>
</protein>
<accession>B8F824</accession>
<gene>
    <name evidence="1" type="primary">dapE</name>
    <name type="ordered locus">HAPS_2008</name>
</gene>
<dbReference type="EC" id="3.5.1.18" evidence="1"/>
<dbReference type="EMBL" id="CP001321">
    <property type="protein sequence ID" value="ACL33476.1"/>
    <property type="molecule type" value="Genomic_DNA"/>
</dbReference>
<dbReference type="RefSeq" id="WP_010787004.1">
    <property type="nucleotide sequence ID" value="NC_011852.1"/>
</dbReference>
<dbReference type="SMR" id="B8F824"/>
<dbReference type="STRING" id="557723.HAPS_2008"/>
<dbReference type="KEGG" id="hap:HAPS_2008"/>
<dbReference type="PATRIC" id="fig|557723.8.peg.1998"/>
<dbReference type="HOGENOM" id="CLU_021802_4_0_6"/>
<dbReference type="UniPathway" id="UPA00034">
    <property type="reaction ID" value="UER00021"/>
</dbReference>
<dbReference type="Proteomes" id="UP000006743">
    <property type="component" value="Chromosome"/>
</dbReference>
<dbReference type="GO" id="GO:0008777">
    <property type="term" value="F:acetylornithine deacetylase activity"/>
    <property type="evidence" value="ECO:0007669"/>
    <property type="project" value="TreeGrafter"/>
</dbReference>
<dbReference type="GO" id="GO:0050897">
    <property type="term" value="F:cobalt ion binding"/>
    <property type="evidence" value="ECO:0007669"/>
    <property type="project" value="UniProtKB-UniRule"/>
</dbReference>
<dbReference type="GO" id="GO:0009014">
    <property type="term" value="F:succinyl-diaminopimelate desuccinylase activity"/>
    <property type="evidence" value="ECO:0007669"/>
    <property type="project" value="UniProtKB-UniRule"/>
</dbReference>
<dbReference type="GO" id="GO:0008270">
    <property type="term" value="F:zinc ion binding"/>
    <property type="evidence" value="ECO:0007669"/>
    <property type="project" value="UniProtKB-UniRule"/>
</dbReference>
<dbReference type="GO" id="GO:0019877">
    <property type="term" value="P:diaminopimelate biosynthetic process"/>
    <property type="evidence" value="ECO:0007669"/>
    <property type="project" value="UniProtKB-UniRule"/>
</dbReference>
<dbReference type="GO" id="GO:0006526">
    <property type="term" value="P:L-arginine biosynthetic process"/>
    <property type="evidence" value="ECO:0007669"/>
    <property type="project" value="TreeGrafter"/>
</dbReference>
<dbReference type="GO" id="GO:0009089">
    <property type="term" value="P:lysine biosynthetic process via diaminopimelate"/>
    <property type="evidence" value="ECO:0007669"/>
    <property type="project" value="UniProtKB-UniRule"/>
</dbReference>
<dbReference type="CDD" id="cd03891">
    <property type="entry name" value="M20_DapE_proteobac"/>
    <property type="match status" value="1"/>
</dbReference>
<dbReference type="FunFam" id="3.40.630.10:FF:000005">
    <property type="entry name" value="Succinyl-diaminopimelate desuccinylase"/>
    <property type="match status" value="1"/>
</dbReference>
<dbReference type="Gene3D" id="3.40.630.10">
    <property type="entry name" value="Zn peptidases"/>
    <property type="match status" value="2"/>
</dbReference>
<dbReference type="HAMAP" id="MF_01690">
    <property type="entry name" value="DapE"/>
    <property type="match status" value="1"/>
</dbReference>
<dbReference type="InterPro" id="IPR001261">
    <property type="entry name" value="ArgE/DapE_CS"/>
</dbReference>
<dbReference type="InterPro" id="IPR036264">
    <property type="entry name" value="Bact_exopeptidase_dim_dom"/>
</dbReference>
<dbReference type="InterPro" id="IPR005941">
    <property type="entry name" value="DapE_proteobac"/>
</dbReference>
<dbReference type="InterPro" id="IPR002933">
    <property type="entry name" value="Peptidase_M20"/>
</dbReference>
<dbReference type="InterPro" id="IPR011650">
    <property type="entry name" value="Peptidase_M20_dimer"/>
</dbReference>
<dbReference type="InterPro" id="IPR050072">
    <property type="entry name" value="Peptidase_M20A"/>
</dbReference>
<dbReference type="NCBIfam" id="TIGR01246">
    <property type="entry name" value="dapE_proteo"/>
    <property type="match status" value="1"/>
</dbReference>
<dbReference type="NCBIfam" id="NF009557">
    <property type="entry name" value="PRK13009.1"/>
    <property type="match status" value="1"/>
</dbReference>
<dbReference type="PANTHER" id="PTHR43808">
    <property type="entry name" value="ACETYLORNITHINE DEACETYLASE"/>
    <property type="match status" value="1"/>
</dbReference>
<dbReference type="PANTHER" id="PTHR43808:SF31">
    <property type="entry name" value="N-ACETYL-L-CITRULLINE DEACETYLASE"/>
    <property type="match status" value="1"/>
</dbReference>
<dbReference type="Pfam" id="PF07687">
    <property type="entry name" value="M20_dimer"/>
    <property type="match status" value="1"/>
</dbReference>
<dbReference type="Pfam" id="PF01546">
    <property type="entry name" value="Peptidase_M20"/>
    <property type="match status" value="1"/>
</dbReference>
<dbReference type="SUPFAM" id="SSF55031">
    <property type="entry name" value="Bacterial exopeptidase dimerisation domain"/>
    <property type="match status" value="1"/>
</dbReference>
<dbReference type="SUPFAM" id="SSF53187">
    <property type="entry name" value="Zn-dependent exopeptidases"/>
    <property type="match status" value="1"/>
</dbReference>
<dbReference type="PROSITE" id="PS00758">
    <property type="entry name" value="ARGE_DAPE_CPG2_1"/>
    <property type="match status" value="1"/>
</dbReference>
<keyword id="KW-0028">Amino-acid biosynthesis</keyword>
<keyword id="KW-0170">Cobalt</keyword>
<keyword id="KW-0220">Diaminopimelate biosynthesis</keyword>
<keyword id="KW-0378">Hydrolase</keyword>
<keyword id="KW-0457">Lysine biosynthesis</keyword>
<keyword id="KW-0479">Metal-binding</keyword>
<keyword id="KW-1185">Reference proteome</keyword>
<keyword id="KW-0862">Zinc</keyword>
<reference key="1">
    <citation type="journal article" date="2009" name="J. Bacteriol.">
        <title>Complete genome sequence of Haemophilus parasuis SH0165.</title>
        <authorList>
            <person name="Yue M."/>
            <person name="Yang F."/>
            <person name="Yang J."/>
            <person name="Bei W."/>
            <person name="Cai X."/>
            <person name="Chen L."/>
            <person name="Dong J."/>
            <person name="Zhou R."/>
            <person name="Jin M."/>
            <person name="Jin Q."/>
            <person name="Chen H."/>
        </authorList>
    </citation>
    <scope>NUCLEOTIDE SEQUENCE [LARGE SCALE GENOMIC DNA]</scope>
    <source>
        <strain>SH0165</strain>
    </source>
</reference>
<feature type="chain" id="PRO_0000375579" description="Succinyl-diaminopimelate desuccinylase">
    <location>
        <begin position="1"/>
        <end position="377"/>
    </location>
</feature>
<feature type="active site" evidence="1">
    <location>
        <position position="69"/>
    </location>
</feature>
<feature type="active site" description="Proton acceptor" evidence="1">
    <location>
        <position position="134"/>
    </location>
</feature>
<feature type="binding site" evidence="1">
    <location>
        <position position="67"/>
    </location>
    <ligand>
        <name>Zn(2+)</name>
        <dbReference type="ChEBI" id="CHEBI:29105"/>
        <label>1</label>
    </ligand>
</feature>
<feature type="binding site" evidence="1">
    <location>
        <position position="100"/>
    </location>
    <ligand>
        <name>Zn(2+)</name>
        <dbReference type="ChEBI" id="CHEBI:29105"/>
        <label>1</label>
    </ligand>
</feature>
<feature type="binding site" evidence="1">
    <location>
        <position position="100"/>
    </location>
    <ligand>
        <name>Zn(2+)</name>
        <dbReference type="ChEBI" id="CHEBI:29105"/>
        <label>2</label>
    </ligand>
</feature>
<feature type="binding site" evidence="1">
    <location>
        <position position="135"/>
    </location>
    <ligand>
        <name>Zn(2+)</name>
        <dbReference type="ChEBI" id="CHEBI:29105"/>
        <label>2</label>
    </ligand>
</feature>
<feature type="binding site" evidence="1">
    <location>
        <position position="163"/>
    </location>
    <ligand>
        <name>Zn(2+)</name>
        <dbReference type="ChEBI" id="CHEBI:29105"/>
        <label>1</label>
    </ligand>
</feature>
<feature type="binding site" evidence="1">
    <location>
        <position position="349"/>
    </location>
    <ligand>
        <name>Zn(2+)</name>
        <dbReference type="ChEBI" id="CHEBI:29105"/>
        <label>2</label>
    </ligand>
</feature>
<name>DAPE_GLAP5</name>
<comment type="function">
    <text evidence="1">Catalyzes the hydrolysis of N-succinyl-L,L-diaminopimelic acid (SDAP), forming succinate and LL-2,6-diaminopimelate (DAP), an intermediate involved in the bacterial biosynthesis of lysine and meso-diaminopimelic acid, an essential component of bacterial cell walls.</text>
</comment>
<comment type="catalytic activity">
    <reaction evidence="1">
        <text>N-succinyl-(2S,6S)-2,6-diaminopimelate + H2O = (2S,6S)-2,6-diaminopimelate + succinate</text>
        <dbReference type="Rhea" id="RHEA:22608"/>
        <dbReference type="ChEBI" id="CHEBI:15377"/>
        <dbReference type="ChEBI" id="CHEBI:30031"/>
        <dbReference type="ChEBI" id="CHEBI:57609"/>
        <dbReference type="ChEBI" id="CHEBI:58087"/>
        <dbReference type="EC" id="3.5.1.18"/>
    </reaction>
</comment>
<comment type="cofactor">
    <cofactor evidence="1">
        <name>Zn(2+)</name>
        <dbReference type="ChEBI" id="CHEBI:29105"/>
    </cofactor>
    <cofactor evidence="1">
        <name>Co(2+)</name>
        <dbReference type="ChEBI" id="CHEBI:48828"/>
    </cofactor>
    <text evidence="1">Binds 2 Zn(2+) or Co(2+) ions per subunit.</text>
</comment>
<comment type="pathway">
    <text evidence="1">Amino-acid biosynthesis; L-lysine biosynthesis via DAP pathway; LL-2,6-diaminopimelate from (S)-tetrahydrodipicolinate (succinylase route): step 3/3.</text>
</comment>
<comment type="subunit">
    <text evidence="1">Homodimer.</text>
</comment>
<comment type="similarity">
    <text evidence="1">Belongs to the peptidase M20A family. DapE subfamily.</text>
</comment>